<proteinExistence type="inferred from homology"/>
<feature type="chain" id="PRO_1000015954" description="Aspartyl/glutamyl-tRNA(Asn/Gln) amidotransferase subunit B">
    <location>
        <begin position="1"/>
        <end position="472"/>
    </location>
</feature>
<comment type="function">
    <text evidence="1">Allows the formation of correctly charged Asn-tRNA(Asn) or Gln-tRNA(Gln) through the transamidation of misacylated Asp-tRNA(Asn) or Glu-tRNA(Gln) in organisms which lack either or both of asparaginyl-tRNA or glutaminyl-tRNA synthetases. The reaction takes place in the presence of glutamine and ATP through an activated phospho-Asp-tRNA(Asn) or phospho-Glu-tRNA(Gln).</text>
</comment>
<comment type="catalytic activity">
    <reaction evidence="1">
        <text>L-glutamyl-tRNA(Gln) + L-glutamine + ATP + H2O = L-glutaminyl-tRNA(Gln) + L-glutamate + ADP + phosphate + H(+)</text>
        <dbReference type="Rhea" id="RHEA:17521"/>
        <dbReference type="Rhea" id="RHEA-COMP:9681"/>
        <dbReference type="Rhea" id="RHEA-COMP:9684"/>
        <dbReference type="ChEBI" id="CHEBI:15377"/>
        <dbReference type="ChEBI" id="CHEBI:15378"/>
        <dbReference type="ChEBI" id="CHEBI:29985"/>
        <dbReference type="ChEBI" id="CHEBI:30616"/>
        <dbReference type="ChEBI" id="CHEBI:43474"/>
        <dbReference type="ChEBI" id="CHEBI:58359"/>
        <dbReference type="ChEBI" id="CHEBI:78520"/>
        <dbReference type="ChEBI" id="CHEBI:78521"/>
        <dbReference type="ChEBI" id="CHEBI:456216"/>
    </reaction>
</comment>
<comment type="catalytic activity">
    <reaction evidence="1">
        <text>L-aspartyl-tRNA(Asn) + L-glutamine + ATP + H2O = L-asparaginyl-tRNA(Asn) + L-glutamate + ADP + phosphate + 2 H(+)</text>
        <dbReference type="Rhea" id="RHEA:14513"/>
        <dbReference type="Rhea" id="RHEA-COMP:9674"/>
        <dbReference type="Rhea" id="RHEA-COMP:9677"/>
        <dbReference type="ChEBI" id="CHEBI:15377"/>
        <dbReference type="ChEBI" id="CHEBI:15378"/>
        <dbReference type="ChEBI" id="CHEBI:29985"/>
        <dbReference type="ChEBI" id="CHEBI:30616"/>
        <dbReference type="ChEBI" id="CHEBI:43474"/>
        <dbReference type="ChEBI" id="CHEBI:58359"/>
        <dbReference type="ChEBI" id="CHEBI:78515"/>
        <dbReference type="ChEBI" id="CHEBI:78516"/>
        <dbReference type="ChEBI" id="CHEBI:456216"/>
    </reaction>
</comment>
<comment type="subunit">
    <text evidence="1">Heterotrimer of A, B and C subunits.</text>
</comment>
<comment type="similarity">
    <text evidence="1">Belongs to the GatB/GatE family. GatB subfamily.</text>
</comment>
<protein>
    <recommendedName>
        <fullName evidence="1">Aspartyl/glutamyl-tRNA(Asn/Gln) amidotransferase subunit B</fullName>
        <shortName evidence="1">Asp/Glu-ADT subunit B</shortName>
        <ecNumber evidence="1">6.3.5.-</ecNumber>
    </recommendedName>
</protein>
<accession>A7H2I0</accession>
<reference key="1">
    <citation type="submission" date="2007-07" db="EMBL/GenBank/DDBJ databases">
        <title>Complete genome sequence of Campylobacter jejuni subsp doylei 269.97 isolated from human blood.</title>
        <authorList>
            <person name="Fouts D.E."/>
            <person name="Mongodin E.F."/>
            <person name="Puiu D."/>
            <person name="Sebastian Y."/>
            <person name="Miller W.G."/>
            <person name="Mandrell R.E."/>
            <person name="Lastovica A.J."/>
            <person name="Nelson K.E."/>
        </authorList>
    </citation>
    <scope>NUCLEOTIDE SEQUENCE [LARGE SCALE GENOMIC DNA]</scope>
    <source>
        <strain>ATCC BAA-1458 / RM4099 / 269.97</strain>
    </source>
</reference>
<name>GATB_CAMJD</name>
<sequence length="472" mass="52995">MFEVVIGLEVHTQLNTKTKIFCSCATSFGEAPNTNVCPTCLALPGALPVLNEEAVKKAIAFGKAVNAAINKKSVFNRKNYFYPDLPKAYQISQFDIPIVEKGELFINVNGENKRIGITRAHLEEDAGKNIHENNFSKVDLNRAGTPLLEIVSEPELRSSDEAVAYLKKLHSIIRFLDISDANMQEGSFRCDANVSIRPKGDTKLYTRVEIKNLNSFRFIQKAIDFEVKRQSEAWEDGTYEQEVVQETRLFDTTNLVTRSMRGKEEAAEYRYFPDPDLLPVLLKDEFLQIKIPELPDEKKMRFVSELGIKESDAEVIISSLEMSRFFESLISQNLSPKLCVNWLNTELMGFLKGELTIENSPVDAQKLGDLIKRIEDGTISAKAAKDVLAFVFENTNVEIDEAIEKLGLKQVSDDSAIEAVIEQILNANADKVAEYKSGKDKLFGFFVGQTMKEGKRAFNPAKVNEILKAKLG</sequence>
<evidence type="ECO:0000255" key="1">
    <source>
        <dbReference type="HAMAP-Rule" id="MF_00121"/>
    </source>
</evidence>
<gene>
    <name evidence="1" type="primary">gatB</name>
    <name type="ordered locus">JJD26997_0532</name>
</gene>
<keyword id="KW-0067">ATP-binding</keyword>
<keyword id="KW-0436">Ligase</keyword>
<keyword id="KW-0547">Nucleotide-binding</keyword>
<keyword id="KW-0648">Protein biosynthesis</keyword>
<dbReference type="EC" id="6.3.5.-" evidence="1"/>
<dbReference type="EMBL" id="CP000768">
    <property type="protein sequence ID" value="ABS43321.1"/>
    <property type="molecule type" value="Genomic_DNA"/>
</dbReference>
<dbReference type="SMR" id="A7H2I0"/>
<dbReference type="KEGG" id="cjd:JJD26997_0532"/>
<dbReference type="HOGENOM" id="CLU_019240_0_0_7"/>
<dbReference type="Proteomes" id="UP000002302">
    <property type="component" value="Chromosome"/>
</dbReference>
<dbReference type="GO" id="GO:0050566">
    <property type="term" value="F:asparaginyl-tRNA synthase (glutamine-hydrolyzing) activity"/>
    <property type="evidence" value="ECO:0007669"/>
    <property type="project" value="RHEA"/>
</dbReference>
<dbReference type="GO" id="GO:0005524">
    <property type="term" value="F:ATP binding"/>
    <property type="evidence" value="ECO:0007669"/>
    <property type="project" value="UniProtKB-KW"/>
</dbReference>
<dbReference type="GO" id="GO:0050567">
    <property type="term" value="F:glutaminyl-tRNA synthase (glutamine-hydrolyzing) activity"/>
    <property type="evidence" value="ECO:0007669"/>
    <property type="project" value="UniProtKB-UniRule"/>
</dbReference>
<dbReference type="GO" id="GO:0070681">
    <property type="term" value="P:glutaminyl-tRNAGln biosynthesis via transamidation"/>
    <property type="evidence" value="ECO:0007669"/>
    <property type="project" value="TreeGrafter"/>
</dbReference>
<dbReference type="GO" id="GO:0006412">
    <property type="term" value="P:translation"/>
    <property type="evidence" value="ECO:0007669"/>
    <property type="project" value="UniProtKB-UniRule"/>
</dbReference>
<dbReference type="FunFam" id="1.10.10.410:FF:000001">
    <property type="entry name" value="Aspartyl/glutamyl-tRNA(Asn/Gln) amidotransferase subunit B"/>
    <property type="match status" value="1"/>
</dbReference>
<dbReference type="Gene3D" id="1.10.10.410">
    <property type="match status" value="1"/>
</dbReference>
<dbReference type="Gene3D" id="1.10.150.380">
    <property type="entry name" value="GatB domain, N-terminal subdomain"/>
    <property type="match status" value="1"/>
</dbReference>
<dbReference type="HAMAP" id="MF_00121">
    <property type="entry name" value="GatB"/>
    <property type="match status" value="1"/>
</dbReference>
<dbReference type="InterPro" id="IPR017959">
    <property type="entry name" value="Asn/Gln-tRNA_amidoTrfase_suB/E"/>
</dbReference>
<dbReference type="InterPro" id="IPR006075">
    <property type="entry name" value="Asn/Gln-tRNA_Trfase_suB/E_cat"/>
</dbReference>
<dbReference type="InterPro" id="IPR018027">
    <property type="entry name" value="Asn/Gln_amidotransferase"/>
</dbReference>
<dbReference type="InterPro" id="IPR003789">
    <property type="entry name" value="Asn/Gln_tRNA_amidoTrase-B-like"/>
</dbReference>
<dbReference type="InterPro" id="IPR004413">
    <property type="entry name" value="GatB"/>
</dbReference>
<dbReference type="InterPro" id="IPR042114">
    <property type="entry name" value="GatB_C_1"/>
</dbReference>
<dbReference type="InterPro" id="IPR023168">
    <property type="entry name" value="GatB_Yqey_C_2"/>
</dbReference>
<dbReference type="InterPro" id="IPR017958">
    <property type="entry name" value="Gln-tRNA_amidoTrfase_suB_CS"/>
</dbReference>
<dbReference type="InterPro" id="IPR014746">
    <property type="entry name" value="Gln_synth/guanido_kin_cat_dom"/>
</dbReference>
<dbReference type="NCBIfam" id="TIGR00133">
    <property type="entry name" value="gatB"/>
    <property type="match status" value="1"/>
</dbReference>
<dbReference type="NCBIfam" id="NF004012">
    <property type="entry name" value="PRK05477.1-2"/>
    <property type="match status" value="1"/>
</dbReference>
<dbReference type="NCBIfam" id="NF004014">
    <property type="entry name" value="PRK05477.1-4"/>
    <property type="match status" value="1"/>
</dbReference>
<dbReference type="PANTHER" id="PTHR11659">
    <property type="entry name" value="GLUTAMYL-TRNA GLN AMIDOTRANSFERASE SUBUNIT B MITOCHONDRIAL AND PROKARYOTIC PET112-RELATED"/>
    <property type="match status" value="1"/>
</dbReference>
<dbReference type="PANTHER" id="PTHR11659:SF0">
    <property type="entry name" value="GLUTAMYL-TRNA(GLN) AMIDOTRANSFERASE SUBUNIT B, MITOCHONDRIAL"/>
    <property type="match status" value="1"/>
</dbReference>
<dbReference type="Pfam" id="PF02934">
    <property type="entry name" value="GatB_N"/>
    <property type="match status" value="1"/>
</dbReference>
<dbReference type="Pfam" id="PF02637">
    <property type="entry name" value="GatB_Yqey"/>
    <property type="match status" value="1"/>
</dbReference>
<dbReference type="SMART" id="SM00845">
    <property type="entry name" value="GatB_Yqey"/>
    <property type="match status" value="1"/>
</dbReference>
<dbReference type="SUPFAM" id="SSF89095">
    <property type="entry name" value="GatB/YqeY motif"/>
    <property type="match status" value="1"/>
</dbReference>
<dbReference type="SUPFAM" id="SSF55931">
    <property type="entry name" value="Glutamine synthetase/guanido kinase"/>
    <property type="match status" value="1"/>
</dbReference>
<dbReference type="PROSITE" id="PS01234">
    <property type="entry name" value="GATB"/>
    <property type="match status" value="1"/>
</dbReference>
<organism>
    <name type="scientific">Campylobacter jejuni subsp. doylei (strain ATCC BAA-1458 / RM4099 / 269.97)</name>
    <dbReference type="NCBI Taxonomy" id="360109"/>
    <lineage>
        <taxon>Bacteria</taxon>
        <taxon>Pseudomonadati</taxon>
        <taxon>Campylobacterota</taxon>
        <taxon>Epsilonproteobacteria</taxon>
        <taxon>Campylobacterales</taxon>
        <taxon>Campylobacteraceae</taxon>
        <taxon>Campylobacter</taxon>
    </lineage>
</organism>